<name>HIS1_DEIDV</name>
<accession>C1CVJ5</accession>
<reference key="1">
    <citation type="journal article" date="2009" name="PLoS Genet.">
        <title>Alliance of proteomics and genomics to unravel the specificities of Sahara bacterium Deinococcus deserti.</title>
        <authorList>
            <person name="de Groot A."/>
            <person name="Dulermo R."/>
            <person name="Ortet P."/>
            <person name="Blanchard L."/>
            <person name="Guerin P."/>
            <person name="Fernandez B."/>
            <person name="Vacherie B."/>
            <person name="Dossat C."/>
            <person name="Jolivet E."/>
            <person name="Siguier P."/>
            <person name="Chandler M."/>
            <person name="Barakat M."/>
            <person name="Dedieu A."/>
            <person name="Barbe V."/>
            <person name="Heulin T."/>
            <person name="Sommer S."/>
            <person name="Achouak W."/>
            <person name="Armengaud J."/>
        </authorList>
    </citation>
    <scope>NUCLEOTIDE SEQUENCE [LARGE SCALE GENOMIC DNA]</scope>
    <source>
        <strain>DSM 17065 / CIP 109153 / LMG 22923 / VCD115</strain>
    </source>
</reference>
<protein>
    <recommendedName>
        <fullName evidence="1">ATP phosphoribosyltransferase</fullName>
        <shortName evidence="1">ATP-PRT</shortName>
        <shortName evidence="1">ATP-PRTase</shortName>
        <ecNumber evidence="1">2.4.2.17</ecNumber>
    </recommendedName>
</protein>
<evidence type="ECO:0000255" key="1">
    <source>
        <dbReference type="HAMAP-Rule" id="MF_01018"/>
    </source>
</evidence>
<dbReference type="EC" id="2.4.2.17" evidence="1"/>
<dbReference type="EMBL" id="CP001114">
    <property type="protein sequence ID" value="ACO46212.1"/>
    <property type="molecule type" value="Genomic_DNA"/>
</dbReference>
<dbReference type="RefSeq" id="WP_012693335.1">
    <property type="nucleotide sequence ID" value="NC_012526.1"/>
</dbReference>
<dbReference type="SMR" id="C1CVJ5"/>
<dbReference type="STRING" id="546414.Deide_12910"/>
<dbReference type="PaxDb" id="546414-Deide_12910"/>
<dbReference type="KEGG" id="ddr:Deide_12910"/>
<dbReference type="eggNOG" id="COG0040">
    <property type="taxonomic scope" value="Bacteria"/>
</dbReference>
<dbReference type="HOGENOM" id="CLU_038115_2_0_0"/>
<dbReference type="OrthoDB" id="9801867at2"/>
<dbReference type="UniPathway" id="UPA00031">
    <property type="reaction ID" value="UER00006"/>
</dbReference>
<dbReference type="Proteomes" id="UP000002208">
    <property type="component" value="Chromosome"/>
</dbReference>
<dbReference type="GO" id="GO:0005737">
    <property type="term" value="C:cytoplasm"/>
    <property type="evidence" value="ECO:0007669"/>
    <property type="project" value="UniProtKB-SubCell"/>
</dbReference>
<dbReference type="GO" id="GO:0005524">
    <property type="term" value="F:ATP binding"/>
    <property type="evidence" value="ECO:0007669"/>
    <property type="project" value="UniProtKB-KW"/>
</dbReference>
<dbReference type="GO" id="GO:0003879">
    <property type="term" value="F:ATP phosphoribosyltransferase activity"/>
    <property type="evidence" value="ECO:0007669"/>
    <property type="project" value="UniProtKB-UniRule"/>
</dbReference>
<dbReference type="GO" id="GO:0000105">
    <property type="term" value="P:L-histidine biosynthetic process"/>
    <property type="evidence" value="ECO:0007669"/>
    <property type="project" value="UniProtKB-UniRule"/>
</dbReference>
<dbReference type="CDD" id="cd13595">
    <property type="entry name" value="PBP2_HisGs"/>
    <property type="match status" value="1"/>
</dbReference>
<dbReference type="FunFam" id="3.40.190.10:FF:000008">
    <property type="entry name" value="ATP phosphoribosyltransferase"/>
    <property type="match status" value="1"/>
</dbReference>
<dbReference type="Gene3D" id="3.40.190.10">
    <property type="entry name" value="Periplasmic binding protein-like II"/>
    <property type="match status" value="2"/>
</dbReference>
<dbReference type="HAMAP" id="MF_01018">
    <property type="entry name" value="HisG_Short"/>
    <property type="match status" value="1"/>
</dbReference>
<dbReference type="InterPro" id="IPR013820">
    <property type="entry name" value="ATP_PRibTrfase_cat"/>
</dbReference>
<dbReference type="InterPro" id="IPR018198">
    <property type="entry name" value="ATP_PRibTrfase_CS"/>
</dbReference>
<dbReference type="InterPro" id="IPR001348">
    <property type="entry name" value="ATP_PRibTrfase_HisG"/>
</dbReference>
<dbReference type="InterPro" id="IPR024893">
    <property type="entry name" value="ATP_PRibTrfase_HisG_short"/>
</dbReference>
<dbReference type="NCBIfam" id="TIGR00070">
    <property type="entry name" value="hisG"/>
    <property type="match status" value="1"/>
</dbReference>
<dbReference type="PANTHER" id="PTHR21403:SF8">
    <property type="entry name" value="ATP PHOSPHORIBOSYLTRANSFERASE"/>
    <property type="match status" value="1"/>
</dbReference>
<dbReference type="PANTHER" id="PTHR21403">
    <property type="entry name" value="ATP PHOSPHORIBOSYLTRANSFERASE ATP-PRTASE"/>
    <property type="match status" value="1"/>
</dbReference>
<dbReference type="Pfam" id="PF01634">
    <property type="entry name" value="HisG"/>
    <property type="match status" value="1"/>
</dbReference>
<dbReference type="SUPFAM" id="SSF53850">
    <property type="entry name" value="Periplasmic binding protein-like II"/>
    <property type="match status" value="1"/>
</dbReference>
<dbReference type="PROSITE" id="PS01316">
    <property type="entry name" value="ATP_P_PHORIBOSYLTR"/>
    <property type="match status" value="1"/>
</dbReference>
<comment type="function">
    <text evidence="1">Catalyzes the condensation of ATP and 5-phosphoribose 1-diphosphate to form N'-(5'-phosphoribosyl)-ATP (PR-ATP). Has a crucial role in the pathway because the rate of histidine biosynthesis seems to be controlled primarily by regulation of HisG enzymatic activity.</text>
</comment>
<comment type="catalytic activity">
    <reaction evidence="1">
        <text>1-(5-phospho-beta-D-ribosyl)-ATP + diphosphate = 5-phospho-alpha-D-ribose 1-diphosphate + ATP</text>
        <dbReference type="Rhea" id="RHEA:18473"/>
        <dbReference type="ChEBI" id="CHEBI:30616"/>
        <dbReference type="ChEBI" id="CHEBI:33019"/>
        <dbReference type="ChEBI" id="CHEBI:58017"/>
        <dbReference type="ChEBI" id="CHEBI:73183"/>
        <dbReference type="EC" id="2.4.2.17"/>
    </reaction>
</comment>
<comment type="pathway">
    <text evidence="1">Amino-acid biosynthesis; L-histidine biosynthesis; L-histidine from 5-phospho-alpha-D-ribose 1-diphosphate: step 1/9.</text>
</comment>
<comment type="subunit">
    <text evidence="1">Heteromultimer composed of HisG and HisZ subunits.</text>
</comment>
<comment type="subcellular location">
    <subcellularLocation>
        <location evidence="1">Cytoplasm</location>
    </subcellularLocation>
</comment>
<comment type="domain">
    <text>Lacks the C-terminal regulatory region which is replaced by HisZ.</text>
</comment>
<comment type="similarity">
    <text evidence="1">Belongs to the ATP phosphoribosyltransferase family. Short subfamily.</text>
</comment>
<organism>
    <name type="scientific">Deinococcus deserti (strain DSM 17065 / CIP 109153 / LMG 22923 / VCD115)</name>
    <dbReference type="NCBI Taxonomy" id="546414"/>
    <lineage>
        <taxon>Bacteria</taxon>
        <taxon>Thermotogati</taxon>
        <taxon>Deinococcota</taxon>
        <taxon>Deinococci</taxon>
        <taxon>Deinococcales</taxon>
        <taxon>Deinococcaceae</taxon>
        <taxon>Deinococcus</taxon>
    </lineage>
</organism>
<keyword id="KW-0028">Amino-acid biosynthesis</keyword>
<keyword id="KW-0067">ATP-binding</keyword>
<keyword id="KW-0963">Cytoplasm</keyword>
<keyword id="KW-0328">Glycosyltransferase</keyword>
<keyword id="KW-0368">Histidine biosynthesis</keyword>
<keyword id="KW-0547">Nucleotide-binding</keyword>
<keyword id="KW-1185">Reference proteome</keyword>
<keyword id="KW-0808">Transferase</keyword>
<gene>
    <name evidence="1" type="primary">hisG</name>
    <name type="ordered locus">Deide_12910</name>
</gene>
<proteinExistence type="inferred from homology"/>
<sequence length="214" mass="23462">MTPAETRTPDHLTLALPKGRILEEAVTLLSRAGLPLTMPEKSRALRHEFPGVTLLELRNQDVPVYVDLGVADAGIVGKDVLLESGRQVYEPVDLRFAACRLSLIREVGAAGPVQRVGTKYPRATREYLNARGIPAEIVKLSGNIELAALTGLADAVVDLVQTGSTLRANNLEELDVLFHSTARLVVNRAALKLRRDRLRPLIEQLRELVQNEPA</sequence>
<feature type="chain" id="PRO_1000213264" description="ATP phosphoribosyltransferase">
    <location>
        <begin position="1"/>
        <end position="214"/>
    </location>
</feature>